<organism>
    <name type="scientific">Botryotinia fuckeliana (strain B05.10)</name>
    <name type="common">Noble rot fungus</name>
    <name type="synonym">Botrytis cinerea</name>
    <dbReference type="NCBI Taxonomy" id="332648"/>
    <lineage>
        <taxon>Eukaryota</taxon>
        <taxon>Fungi</taxon>
        <taxon>Dikarya</taxon>
        <taxon>Ascomycota</taxon>
        <taxon>Pezizomycotina</taxon>
        <taxon>Leotiomycetes</taxon>
        <taxon>Helotiales</taxon>
        <taxon>Sclerotiniaceae</taxon>
        <taxon>Botrytis</taxon>
    </lineage>
</organism>
<accession>A0A384JW35</accession>
<protein>
    <recommendedName>
        <fullName evidence="4">Class II hydrophobin 2</fullName>
    </recommendedName>
</protein>
<feature type="signal peptide" evidence="2">
    <location>
        <begin position="1"/>
        <end position="21"/>
    </location>
</feature>
<feature type="chain" id="PRO_5017087266" description="Class II hydrophobin 2">
    <location>
        <begin position="22"/>
        <end position="98"/>
    </location>
</feature>
<feature type="disulfide bond" evidence="1">
    <location>
        <begin position="34"/>
        <end position="80"/>
    </location>
</feature>
<feature type="disulfide bond" evidence="1">
    <location>
        <begin position="41"/>
        <end position="71"/>
    </location>
</feature>
<feature type="disulfide bond" evidence="1">
    <location>
        <begin position="42"/>
        <end position="54"/>
    </location>
</feature>
<feature type="disulfide bond" evidence="1">
    <location>
        <begin position="81"/>
        <end position="92"/>
    </location>
</feature>
<proteinExistence type="inferred from homology"/>
<keyword id="KW-0134">Cell wall</keyword>
<keyword id="KW-1015">Disulfide bond</keyword>
<keyword id="KW-1185">Reference proteome</keyword>
<keyword id="KW-0964">Secreted</keyword>
<keyword id="KW-0732">Signal</keyword>
<reference key="1">
    <citation type="journal article" date="2011" name="PLoS Genet.">
        <title>Genomic analysis of the necrotrophic fungal pathogens Sclerotinia sclerotiorum and Botrytis cinerea.</title>
        <authorList>
            <person name="Amselem J."/>
            <person name="Cuomo C.A."/>
            <person name="van Kan J.A.L."/>
            <person name="Viaud M."/>
            <person name="Benito E.P."/>
            <person name="Couloux A."/>
            <person name="Coutinho P.M."/>
            <person name="de Vries R.P."/>
            <person name="Dyer P.S."/>
            <person name="Fillinger S."/>
            <person name="Fournier E."/>
            <person name="Gout L."/>
            <person name="Hahn M."/>
            <person name="Kohn L."/>
            <person name="Lapalu N."/>
            <person name="Plummer K.M."/>
            <person name="Pradier J.-M."/>
            <person name="Quevillon E."/>
            <person name="Sharon A."/>
            <person name="Simon A."/>
            <person name="ten Have A."/>
            <person name="Tudzynski B."/>
            <person name="Tudzynski P."/>
            <person name="Wincker P."/>
            <person name="Andrew M."/>
            <person name="Anthouard V."/>
            <person name="Beever R.E."/>
            <person name="Beffa R."/>
            <person name="Benoit I."/>
            <person name="Bouzid O."/>
            <person name="Brault B."/>
            <person name="Chen Z."/>
            <person name="Choquer M."/>
            <person name="Collemare J."/>
            <person name="Cotton P."/>
            <person name="Danchin E.G."/>
            <person name="Da Silva C."/>
            <person name="Gautier A."/>
            <person name="Giraud C."/>
            <person name="Giraud T."/>
            <person name="Gonzalez C."/>
            <person name="Grossetete S."/>
            <person name="Gueldener U."/>
            <person name="Henrissat B."/>
            <person name="Howlett B.J."/>
            <person name="Kodira C."/>
            <person name="Kretschmer M."/>
            <person name="Lappartient A."/>
            <person name="Leroch M."/>
            <person name="Levis C."/>
            <person name="Mauceli E."/>
            <person name="Neuveglise C."/>
            <person name="Oeser B."/>
            <person name="Pearson M."/>
            <person name="Poulain J."/>
            <person name="Poussereau N."/>
            <person name="Quesneville H."/>
            <person name="Rascle C."/>
            <person name="Schumacher J."/>
            <person name="Segurens B."/>
            <person name="Sexton A."/>
            <person name="Silva E."/>
            <person name="Sirven C."/>
            <person name="Soanes D.M."/>
            <person name="Talbot N.J."/>
            <person name="Templeton M."/>
            <person name="Yandava C."/>
            <person name="Yarden O."/>
            <person name="Zeng Q."/>
            <person name="Rollins J.A."/>
            <person name="Lebrun M.-H."/>
            <person name="Dickman M."/>
        </authorList>
    </citation>
    <scope>NUCLEOTIDE SEQUENCE [LARGE SCALE GENOMIC DNA]</scope>
    <source>
        <strain>B05.10</strain>
    </source>
</reference>
<reference key="2">
    <citation type="journal article" date="2012" name="Eukaryot. Cell">
        <title>Genome update of Botrytis cinerea strains B05.10 and T4.</title>
        <authorList>
            <person name="Staats M."/>
            <person name="van Kan J.A.L."/>
        </authorList>
    </citation>
    <scope>NUCLEOTIDE SEQUENCE [LARGE SCALE GENOMIC DNA]</scope>
    <source>
        <strain>B05.10</strain>
    </source>
</reference>
<reference key="3">
    <citation type="journal article" date="2017" name="Mol. Plant Pathol.">
        <title>A gapless genome sequence of the fungus Botrytis cinerea.</title>
        <authorList>
            <person name="van Kan J.A.L."/>
            <person name="Stassen J.H.M."/>
            <person name="Mosbach A."/>
            <person name="van der Lee T.A.J."/>
            <person name="Faino L."/>
            <person name="Farmer A.D."/>
            <person name="Papasotiriou D.G."/>
            <person name="Zhou S."/>
            <person name="Seidl M.F."/>
            <person name="Cottam E."/>
            <person name="Edel D."/>
            <person name="Hahn M."/>
            <person name="Schwartz D.C."/>
            <person name="Dietrich R.A."/>
            <person name="Widdison S."/>
            <person name="Scalliet G."/>
        </authorList>
    </citation>
    <scope>NUCLEOTIDE SEQUENCE [LARGE SCALE GENOMIC DNA]</scope>
    <source>
        <strain>B05.10</strain>
    </source>
</reference>
<reference key="4">
    <citation type="journal article" date="2011" name="BMC Microbiol.">
        <title>Lack of evidence for a role of hydrophobins in conferring surface hydrophobicity to conidia and hyphae of Botrytis cinerea.</title>
        <authorList>
            <person name="Mosbach A."/>
            <person name="Leroch M."/>
            <person name="Mendgen K.W."/>
            <person name="Hahn M."/>
        </authorList>
    </citation>
    <scope>FUNCTION</scope>
    <scope>DISRUPTION PHENOTYPE</scope>
</reference>
<dbReference type="EMBL" id="CP009815">
    <property type="protein sequence ID" value="ATZ54816.1"/>
    <property type="molecule type" value="Genomic_DNA"/>
</dbReference>
<dbReference type="RefSeq" id="XP_001556609.2">
    <property type="nucleotide sequence ID" value="XM_001556559.2"/>
</dbReference>
<dbReference type="EnsemblFungi" id="Bcin11g01450.1">
    <property type="protein sequence ID" value="Bcin11p01450.1"/>
    <property type="gene ID" value="Bcin11g01450"/>
</dbReference>
<dbReference type="GeneID" id="5437218"/>
<dbReference type="KEGG" id="bfu:BCIN_11g01450"/>
<dbReference type="VEuPathDB" id="FungiDB:Bcin11g01450"/>
<dbReference type="OrthoDB" id="4500971at2759"/>
<dbReference type="Proteomes" id="UP000001798">
    <property type="component" value="Chromosome bcin11"/>
</dbReference>
<dbReference type="GO" id="GO:0005576">
    <property type="term" value="C:extracellular region"/>
    <property type="evidence" value="ECO:0007669"/>
    <property type="project" value="UniProtKB-SubCell"/>
</dbReference>
<dbReference type="CDD" id="cd23508">
    <property type="entry name" value="hydrophobin_II"/>
    <property type="match status" value="1"/>
</dbReference>
<dbReference type="Gene3D" id="3.20.120.10">
    <property type="entry name" value="Hydrophobin"/>
    <property type="match status" value="1"/>
</dbReference>
<dbReference type="InterPro" id="IPR010636">
    <property type="entry name" value="Cerato-ulmin_hydrophobin"/>
</dbReference>
<dbReference type="InterPro" id="IPR036686">
    <property type="entry name" value="Hydrophobin_sf"/>
</dbReference>
<dbReference type="PANTHER" id="PTHR42341">
    <property type="entry name" value="HYDROPHOBIN"/>
    <property type="match status" value="1"/>
</dbReference>
<dbReference type="PANTHER" id="PTHR42341:SF1">
    <property type="entry name" value="HYDROPHOBIN"/>
    <property type="match status" value="1"/>
</dbReference>
<dbReference type="Pfam" id="PF06766">
    <property type="entry name" value="Hydrophobin_2"/>
    <property type="match status" value="1"/>
</dbReference>
<dbReference type="SUPFAM" id="SSF101751">
    <property type="entry name" value="Hydrophobin II, HfbII"/>
    <property type="match status" value="1"/>
</dbReference>
<gene>
    <name evidence="4" type="primary">Bhp2</name>
    <name type="ORF">BCIN_11g01450</name>
</gene>
<evidence type="ECO:0000250" key="1">
    <source>
        <dbReference type="UniProtKB" id="P52754"/>
    </source>
</evidence>
<evidence type="ECO:0000255" key="2"/>
<evidence type="ECO:0000269" key="3">
    <source>
    </source>
</evidence>
<evidence type="ECO:0000303" key="4">
    <source>
    </source>
</evidence>
<evidence type="ECO:0000305" key="5"/>
<evidence type="ECO:0000305" key="6">
    <source>
    </source>
</evidence>
<name>BHP2_BOTFB</name>
<sequence>MFFSRISTIVSMTALFASALAMPTTLTSRQDAICSSGNPQCCDVDVLGVADLDCEAPPAAYTDIKSFSDVCADVGKINMCCDLPVLGQGLICSSPDNS</sequence>
<comment type="function">
    <text evidence="3 6">Aerial growth, conidiation, and dispersal of filamentous fungi in the environment rely upon a capability of their secreting small amphipathic proteins called hydrophobins (HPBs) with low sequence identity. Class I can self-assemble into an outermost layer of rodlet bundles on aerial cell surfaces, conferring cellular hydrophobicity that supports fungal growth, development and dispersal; whereas Class II form highly ordered films at water-air interfaces through intermolecular interactions but contribute nothing to the rodlet structure (Probable). In Botryotinia fuckeliana, hydrophobins are not involved in conferring surface hydrophobicity to conidia and aerial hyphae and their function in sclerotia and fruiting bodies remains to be investigated (PubMed:21232149).</text>
</comment>
<comment type="subcellular location">
    <subcellularLocation>
        <location evidence="6">Secreted</location>
    </subcellularLocation>
    <subcellularLocation>
        <location evidence="6">Secreted</location>
        <location evidence="6">Cell wall</location>
    </subcellularLocation>
</comment>
<comment type="disruption phenotype">
    <text evidence="3">Does not seem to affect germination and growth, formation of sclerotia, ability to penetrate and infect host tissue, nor spore and mycelium surface properties.</text>
</comment>
<comment type="similarity">
    <text evidence="5">Belongs to the cerato-ulmin hydrophobin family.</text>
</comment>